<organism>
    <name type="scientific">Schizosaccharomyces pombe (strain 972 / ATCC 24843)</name>
    <name type="common">Fission yeast</name>
    <dbReference type="NCBI Taxonomy" id="284812"/>
    <lineage>
        <taxon>Eukaryota</taxon>
        <taxon>Fungi</taxon>
        <taxon>Dikarya</taxon>
        <taxon>Ascomycota</taxon>
        <taxon>Taphrinomycotina</taxon>
        <taxon>Schizosaccharomycetes</taxon>
        <taxon>Schizosaccharomycetales</taxon>
        <taxon>Schizosaccharomycetaceae</taxon>
        <taxon>Schizosaccharomyces</taxon>
    </lineage>
</organism>
<protein>
    <recommendedName>
        <fullName>Mitogen-activated protein kinase spm1</fullName>
        <shortName>MAP kinase spm1</shortName>
        <ecNumber>2.7.11.24</ecNumber>
    </recommendedName>
    <alternativeName>
        <fullName>MAP kinase pmk1</fullName>
    </alternativeName>
</protein>
<name>SPM1_SCHPO</name>
<gene>
    <name type="primary">spm1</name>
    <name type="synonym">pmk1</name>
    <name type="ORF">SPBC119.08</name>
</gene>
<evidence type="ECO:0000250" key="1"/>
<evidence type="ECO:0000255" key="2">
    <source>
        <dbReference type="PROSITE-ProRule" id="PRU00159"/>
    </source>
</evidence>
<evidence type="ECO:0000255" key="3">
    <source>
        <dbReference type="PROSITE-ProRule" id="PRU10027"/>
    </source>
</evidence>
<evidence type="ECO:0000256" key="4">
    <source>
        <dbReference type="SAM" id="MobiDB-lite"/>
    </source>
</evidence>
<evidence type="ECO:0000269" key="5">
    <source>
    </source>
</evidence>
<evidence type="ECO:0000305" key="6"/>
<dbReference type="EC" id="2.7.11.24"/>
<dbReference type="EMBL" id="X98243">
    <property type="protein sequence ID" value="CAA66899.1"/>
    <property type="molecule type" value="Genomic_DNA"/>
</dbReference>
<dbReference type="EMBL" id="U65405">
    <property type="protein sequence ID" value="AAC49707.1"/>
    <property type="molecule type" value="Genomic_DNA"/>
</dbReference>
<dbReference type="EMBL" id="CU329671">
    <property type="protein sequence ID" value="CAA17923.1"/>
    <property type="molecule type" value="Genomic_DNA"/>
</dbReference>
<dbReference type="PIR" id="T39306">
    <property type="entry name" value="T39306"/>
</dbReference>
<dbReference type="RefSeq" id="NP_595289.1">
    <property type="nucleotide sequence ID" value="NM_001021196.2"/>
</dbReference>
<dbReference type="SMR" id="Q92398"/>
<dbReference type="BioGRID" id="276464">
    <property type="interactions" value="136"/>
</dbReference>
<dbReference type="FunCoup" id="Q92398">
    <property type="interactions" value="427"/>
</dbReference>
<dbReference type="STRING" id="284812.Q92398"/>
<dbReference type="iPTMnet" id="Q92398"/>
<dbReference type="PaxDb" id="4896-SPBC119.08.1"/>
<dbReference type="EnsemblFungi" id="SPBC119.08.1">
    <property type="protein sequence ID" value="SPBC119.08.1:pep"/>
    <property type="gene ID" value="SPBC119.08"/>
</dbReference>
<dbReference type="GeneID" id="2539920"/>
<dbReference type="KEGG" id="spo:2539920"/>
<dbReference type="PomBase" id="SPBC119.08"/>
<dbReference type="VEuPathDB" id="FungiDB:SPBC119.08"/>
<dbReference type="eggNOG" id="KOG0660">
    <property type="taxonomic scope" value="Eukaryota"/>
</dbReference>
<dbReference type="HOGENOM" id="CLU_000288_181_1_1"/>
<dbReference type="InParanoid" id="Q92398"/>
<dbReference type="OMA" id="MDIPRPE"/>
<dbReference type="PhylomeDB" id="Q92398"/>
<dbReference type="BRENDA" id="2.7.11.24">
    <property type="organism ID" value="5613"/>
</dbReference>
<dbReference type="Reactome" id="R-SPO-110056">
    <property type="pathway name" value="MAPK3 (ERK1) activation"/>
</dbReference>
<dbReference type="Reactome" id="R-SPO-111995">
    <property type="pathway name" value="phospho-PLA2 pathway"/>
</dbReference>
<dbReference type="Reactome" id="R-SPO-112409">
    <property type="pathway name" value="RAF-independent MAPK1/3 activation"/>
</dbReference>
<dbReference type="Reactome" id="R-SPO-112411">
    <property type="pathway name" value="MAPK1 (ERK2) activation"/>
</dbReference>
<dbReference type="Reactome" id="R-SPO-170968">
    <property type="pathway name" value="Frs2-mediated activation"/>
</dbReference>
<dbReference type="Reactome" id="R-SPO-198753">
    <property type="pathway name" value="ERK/MAPK targets"/>
</dbReference>
<dbReference type="Reactome" id="R-SPO-198765">
    <property type="pathway name" value="Signalling to ERK5"/>
</dbReference>
<dbReference type="Reactome" id="R-SPO-202670">
    <property type="pathway name" value="ERKs are inactivated"/>
</dbReference>
<dbReference type="Reactome" id="R-SPO-2559582">
    <property type="pathway name" value="Senescence-Associated Secretory Phenotype (SASP)"/>
</dbReference>
<dbReference type="Reactome" id="R-SPO-3371453">
    <property type="pathway name" value="Regulation of HSF1-mediated heat shock response"/>
</dbReference>
<dbReference type="Reactome" id="R-SPO-375165">
    <property type="pathway name" value="NCAM signaling for neurite out-growth"/>
</dbReference>
<dbReference type="Reactome" id="R-SPO-4086398">
    <property type="pathway name" value="Ca2+ pathway"/>
</dbReference>
<dbReference type="Reactome" id="R-SPO-437239">
    <property type="pathway name" value="Recycling pathway of L1"/>
</dbReference>
<dbReference type="Reactome" id="R-SPO-445144">
    <property type="pathway name" value="Signal transduction by L1"/>
</dbReference>
<dbReference type="Reactome" id="R-SPO-450341">
    <property type="pathway name" value="Activation of the AP-1 family of transcription factors"/>
</dbReference>
<dbReference type="Reactome" id="R-SPO-5668599">
    <property type="pathway name" value="RHO GTPases Activate NADPH Oxidases"/>
</dbReference>
<dbReference type="Reactome" id="R-SPO-5673001">
    <property type="pathway name" value="RAF/MAP kinase cascade"/>
</dbReference>
<dbReference type="Reactome" id="R-SPO-5674135">
    <property type="pathway name" value="MAP2K and MAPK activation"/>
</dbReference>
<dbReference type="Reactome" id="R-SPO-5674499">
    <property type="pathway name" value="Negative feedback regulation of MAPK pathway"/>
</dbReference>
<dbReference type="Reactome" id="R-SPO-5675221">
    <property type="pathway name" value="Negative regulation of MAPK pathway"/>
</dbReference>
<dbReference type="Reactome" id="R-SPO-5687128">
    <property type="pathway name" value="MAPK6/MAPK4 signaling"/>
</dbReference>
<dbReference type="Reactome" id="R-SPO-6798695">
    <property type="pathway name" value="Neutrophil degranulation"/>
</dbReference>
<dbReference type="Reactome" id="R-SPO-881907">
    <property type="pathway name" value="Gastrin-CREB signalling pathway via PKC and MAPK"/>
</dbReference>
<dbReference type="Reactome" id="R-SPO-9634635">
    <property type="pathway name" value="Estrogen-stimulated signaling through PRKCZ"/>
</dbReference>
<dbReference type="Reactome" id="R-SPO-9856649">
    <property type="pathway name" value="Transcriptional and post-translational regulation of MITF-M expression and activity"/>
</dbReference>
<dbReference type="PRO" id="PR:Q92398"/>
<dbReference type="Proteomes" id="UP000002485">
    <property type="component" value="Chromosome II"/>
</dbReference>
<dbReference type="GO" id="GO:0032153">
    <property type="term" value="C:cell division site"/>
    <property type="evidence" value="ECO:0007005"/>
    <property type="project" value="PomBase"/>
</dbReference>
<dbReference type="GO" id="GO:0005737">
    <property type="term" value="C:cytoplasm"/>
    <property type="evidence" value="ECO:0000314"/>
    <property type="project" value="PomBase"/>
</dbReference>
<dbReference type="GO" id="GO:0005829">
    <property type="term" value="C:cytosol"/>
    <property type="evidence" value="ECO:0007005"/>
    <property type="project" value="PomBase"/>
</dbReference>
<dbReference type="GO" id="GO:0044732">
    <property type="term" value="C:mitotic spindle pole body"/>
    <property type="evidence" value="ECO:0007005"/>
    <property type="project" value="PomBase"/>
</dbReference>
<dbReference type="GO" id="GO:0005634">
    <property type="term" value="C:nucleus"/>
    <property type="evidence" value="ECO:0000314"/>
    <property type="project" value="PomBase"/>
</dbReference>
<dbReference type="GO" id="GO:0005524">
    <property type="term" value="F:ATP binding"/>
    <property type="evidence" value="ECO:0007669"/>
    <property type="project" value="UniProtKB-KW"/>
</dbReference>
<dbReference type="GO" id="GO:0004707">
    <property type="term" value="F:MAP kinase activity"/>
    <property type="evidence" value="ECO:0000314"/>
    <property type="project" value="PomBase"/>
</dbReference>
<dbReference type="GO" id="GO:0106310">
    <property type="term" value="F:protein serine kinase activity"/>
    <property type="evidence" value="ECO:0007669"/>
    <property type="project" value="RHEA"/>
</dbReference>
<dbReference type="GO" id="GO:0000196">
    <property type="term" value="P:cell integrity MAPK cascade"/>
    <property type="evidence" value="ECO:0000314"/>
    <property type="project" value="PomBase"/>
</dbReference>
<dbReference type="GO" id="GO:0035556">
    <property type="term" value="P:intracellular signal transduction"/>
    <property type="evidence" value="ECO:0000318"/>
    <property type="project" value="GO_Central"/>
</dbReference>
<dbReference type="GO" id="GO:1902660">
    <property type="term" value="P:negative regulation of glucose mediated signaling pathway"/>
    <property type="evidence" value="ECO:0000315"/>
    <property type="project" value="PomBase"/>
</dbReference>
<dbReference type="GO" id="GO:1902413">
    <property type="term" value="P:negative regulation of mitotic cytokinesis"/>
    <property type="evidence" value="ECO:0000315"/>
    <property type="project" value="PomBase"/>
</dbReference>
<dbReference type="GO" id="GO:1905665">
    <property type="term" value="P:positive regulation of calcium ion import across plasma membrane"/>
    <property type="evidence" value="ECO:0000315"/>
    <property type="project" value="PomBase"/>
</dbReference>
<dbReference type="GO" id="GO:0050850">
    <property type="term" value="P:positive regulation of calcium-mediated signaling"/>
    <property type="evidence" value="ECO:0000315"/>
    <property type="project" value="PomBase"/>
</dbReference>
<dbReference type="GO" id="GO:1903340">
    <property type="term" value="P:positive regulation of cell wall organization or biogenesis"/>
    <property type="evidence" value="ECO:0000269"/>
    <property type="project" value="PomBase"/>
</dbReference>
<dbReference type="GO" id="GO:0045944">
    <property type="term" value="P:positive regulation of transcription by RNA polymerase II"/>
    <property type="evidence" value="ECO:0000269"/>
    <property type="project" value="PomBase"/>
</dbReference>
<dbReference type="GO" id="GO:0008360">
    <property type="term" value="P:regulation of cell shape"/>
    <property type="evidence" value="ECO:0007669"/>
    <property type="project" value="UniProtKB-KW"/>
</dbReference>
<dbReference type="GO" id="GO:1903338">
    <property type="term" value="P:regulation of cell wall organization or biogenesis"/>
    <property type="evidence" value="ECO:0000269"/>
    <property type="project" value="PomBase"/>
</dbReference>
<dbReference type="GO" id="GO:0032995">
    <property type="term" value="P:regulation of fungal-type cell wall biogenesis"/>
    <property type="evidence" value="ECO:0000315"/>
    <property type="project" value="PomBase"/>
</dbReference>
<dbReference type="CDD" id="cd07857">
    <property type="entry name" value="STKc_MPK1"/>
    <property type="match status" value="1"/>
</dbReference>
<dbReference type="FunFam" id="1.10.510.10:FF:000013">
    <property type="entry name" value="Mitogen-activated protein kinase"/>
    <property type="match status" value="1"/>
</dbReference>
<dbReference type="FunFam" id="3.30.200.20:FF:000647">
    <property type="entry name" value="Mitogen-activated protein kinase"/>
    <property type="match status" value="1"/>
</dbReference>
<dbReference type="Gene3D" id="3.30.200.20">
    <property type="entry name" value="Phosphorylase Kinase, domain 1"/>
    <property type="match status" value="1"/>
</dbReference>
<dbReference type="Gene3D" id="1.10.510.10">
    <property type="entry name" value="Transferase(Phosphotransferase) domain 1"/>
    <property type="match status" value="1"/>
</dbReference>
<dbReference type="InterPro" id="IPR011009">
    <property type="entry name" value="Kinase-like_dom_sf"/>
</dbReference>
<dbReference type="InterPro" id="IPR050117">
    <property type="entry name" value="MAP_kinase"/>
</dbReference>
<dbReference type="InterPro" id="IPR003527">
    <property type="entry name" value="MAP_kinase_CS"/>
</dbReference>
<dbReference type="InterPro" id="IPR000719">
    <property type="entry name" value="Prot_kinase_dom"/>
</dbReference>
<dbReference type="InterPro" id="IPR017441">
    <property type="entry name" value="Protein_kinase_ATP_BS"/>
</dbReference>
<dbReference type="InterPro" id="IPR008271">
    <property type="entry name" value="Ser/Thr_kinase_AS"/>
</dbReference>
<dbReference type="PANTHER" id="PTHR24055">
    <property type="entry name" value="MITOGEN-ACTIVATED PROTEIN KINASE"/>
    <property type="match status" value="1"/>
</dbReference>
<dbReference type="Pfam" id="PF00069">
    <property type="entry name" value="Pkinase"/>
    <property type="match status" value="1"/>
</dbReference>
<dbReference type="SMART" id="SM00220">
    <property type="entry name" value="S_TKc"/>
    <property type="match status" value="1"/>
</dbReference>
<dbReference type="SUPFAM" id="SSF56112">
    <property type="entry name" value="Protein kinase-like (PK-like)"/>
    <property type="match status" value="1"/>
</dbReference>
<dbReference type="PROSITE" id="PS01351">
    <property type="entry name" value="MAPK"/>
    <property type="match status" value="1"/>
</dbReference>
<dbReference type="PROSITE" id="PS00107">
    <property type="entry name" value="PROTEIN_KINASE_ATP"/>
    <property type="match status" value="1"/>
</dbReference>
<dbReference type="PROSITE" id="PS50011">
    <property type="entry name" value="PROTEIN_KINASE_DOM"/>
    <property type="match status" value="1"/>
</dbReference>
<dbReference type="PROSITE" id="PS00108">
    <property type="entry name" value="PROTEIN_KINASE_ST"/>
    <property type="match status" value="1"/>
</dbReference>
<accession>Q92398</accession>
<sequence>MDRRHRVYRVFNQEMYVEPNFKVVKELGQGAYGIVCAARNVASKDQEAVAIKKITNVFSKSILTKRALREIKLLIHFRNHRNITCIYDLDIINPYNFNEVYIYEELMEADLNAIIKSGQPLTDAHFQSFIYQILCGLKYIHSANVIHRDLKPGNLLVNADCELKICDFGLARGCSENPEENPGFMTEYVATRWYRAPEIMLSFSSYHKGIDVWSVGCILAELLGGTPLFKGKDFVHQLNLILHQLGTPDEETLSHISSSRAQEYVRSLPKQRPIPFETNFPKANPLALDLLAKLLAFDPNRRISVDDALEHPYLAVWHDPSDEPVCDSVFDFSFEYIEDANELRRVILDEVLNFRQKVRRRSHPTNPTVNIPQPAQTVPSNDNGSFNVSSSSSSQTSNKKRHDHSYNETAAIDHKSDDNRHN</sequence>
<feature type="chain" id="PRO_0000186341" description="Mitogen-activated protein kinase spm1">
    <location>
        <begin position="1"/>
        <end position="422"/>
    </location>
</feature>
<feature type="domain" description="Protein kinase" evidence="2">
    <location>
        <begin position="21"/>
        <end position="314"/>
    </location>
</feature>
<feature type="region of interest" description="Disordered" evidence="4">
    <location>
        <begin position="359"/>
        <end position="422"/>
    </location>
</feature>
<feature type="short sequence motif" description="TXY">
    <location>
        <begin position="186"/>
        <end position="188"/>
    </location>
</feature>
<feature type="compositionally biased region" description="Polar residues" evidence="4">
    <location>
        <begin position="364"/>
        <end position="379"/>
    </location>
</feature>
<feature type="compositionally biased region" description="Low complexity" evidence="4">
    <location>
        <begin position="380"/>
        <end position="397"/>
    </location>
</feature>
<feature type="compositionally biased region" description="Basic and acidic residues" evidence="4">
    <location>
        <begin position="411"/>
        <end position="422"/>
    </location>
</feature>
<feature type="active site" description="Proton acceptor" evidence="2 3">
    <location>
        <position position="149"/>
    </location>
</feature>
<feature type="binding site" evidence="2">
    <location>
        <begin position="27"/>
        <end position="35"/>
    </location>
    <ligand>
        <name>ATP</name>
        <dbReference type="ChEBI" id="CHEBI:30616"/>
    </ligand>
</feature>
<feature type="binding site" evidence="2">
    <location>
        <position position="52"/>
    </location>
    <ligand>
        <name>ATP</name>
        <dbReference type="ChEBI" id="CHEBI:30616"/>
    </ligand>
</feature>
<feature type="modified residue" description="Phosphothreonine" evidence="5">
    <location>
        <position position="186"/>
    </location>
</feature>
<feature type="modified residue" description="Phosphotyrosine" evidence="5">
    <location>
        <position position="188"/>
    </location>
</feature>
<proteinExistence type="evidence at protein level"/>
<reference key="1">
    <citation type="journal article" date="1996" name="Mol. Cell. Biol.">
        <title>The fission yeast pmk1+ gene encodes a novel mitogen-activated protein kinase homolog which regulates cell integrity and functions coordinately with the protein kinase C pathway.</title>
        <authorList>
            <person name="Toda T."/>
            <person name="Dhut S."/>
            <person name="Superti-Furga G."/>
            <person name="Gotoh G."/>
            <person name="Nishida E."/>
            <person name="Sugiura R."/>
            <person name="Kuno T."/>
        </authorList>
    </citation>
    <scope>NUCLEOTIDE SEQUENCE [GENOMIC DNA]</scope>
</reference>
<reference key="2">
    <citation type="journal article" date="1997" name="EMBO J.">
        <title>Spm1, a stress-activated MAP kinase that regulates morphogenesis in S.pombe.</title>
        <authorList>
            <person name="Zaitsevskaya-Carter T."/>
            <person name="Cooper J.A."/>
        </authorList>
    </citation>
    <scope>NUCLEOTIDE SEQUENCE [GENOMIC DNA]</scope>
</reference>
<reference key="3">
    <citation type="journal article" date="2002" name="Nature">
        <title>The genome sequence of Schizosaccharomyces pombe.</title>
        <authorList>
            <person name="Wood V."/>
            <person name="Gwilliam R."/>
            <person name="Rajandream M.A."/>
            <person name="Lyne M.H."/>
            <person name="Lyne R."/>
            <person name="Stewart A."/>
            <person name="Sgouros J.G."/>
            <person name="Peat N."/>
            <person name="Hayles J."/>
            <person name="Baker S.G."/>
            <person name="Basham D."/>
            <person name="Bowman S."/>
            <person name="Brooks K."/>
            <person name="Brown D."/>
            <person name="Brown S."/>
            <person name="Chillingworth T."/>
            <person name="Churcher C.M."/>
            <person name="Collins M."/>
            <person name="Connor R."/>
            <person name="Cronin A."/>
            <person name="Davis P."/>
            <person name="Feltwell T."/>
            <person name="Fraser A."/>
            <person name="Gentles S."/>
            <person name="Goble A."/>
            <person name="Hamlin N."/>
            <person name="Harris D.E."/>
            <person name="Hidalgo J."/>
            <person name="Hodgson G."/>
            <person name="Holroyd S."/>
            <person name="Hornsby T."/>
            <person name="Howarth S."/>
            <person name="Huckle E.J."/>
            <person name="Hunt S."/>
            <person name="Jagels K."/>
            <person name="James K.D."/>
            <person name="Jones L."/>
            <person name="Jones M."/>
            <person name="Leather S."/>
            <person name="McDonald S."/>
            <person name="McLean J."/>
            <person name="Mooney P."/>
            <person name="Moule S."/>
            <person name="Mungall K.L."/>
            <person name="Murphy L.D."/>
            <person name="Niblett D."/>
            <person name="Odell C."/>
            <person name="Oliver K."/>
            <person name="O'Neil S."/>
            <person name="Pearson D."/>
            <person name="Quail M.A."/>
            <person name="Rabbinowitsch E."/>
            <person name="Rutherford K.M."/>
            <person name="Rutter S."/>
            <person name="Saunders D."/>
            <person name="Seeger K."/>
            <person name="Sharp S."/>
            <person name="Skelton J."/>
            <person name="Simmonds M.N."/>
            <person name="Squares R."/>
            <person name="Squares S."/>
            <person name="Stevens K."/>
            <person name="Taylor K."/>
            <person name="Taylor R.G."/>
            <person name="Tivey A."/>
            <person name="Walsh S.V."/>
            <person name="Warren T."/>
            <person name="Whitehead S."/>
            <person name="Woodward J.R."/>
            <person name="Volckaert G."/>
            <person name="Aert R."/>
            <person name="Robben J."/>
            <person name="Grymonprez B."/>
            <person name="Weltjens I."/>
            <person name="Vanstreels E."/>
            <person name="Rieger M."/>
            <person name="Schaefer M."/>
            <person name="Mueller-Auer S."/>
            <person name="Gabel C."/>
            <person name="Fuchs M."/>
            <person name="Duesterhoeft A."/>
            <person name="Fritzc C."/>
            <person name="Holzer E."/>
            <person name="Moestl D."/>
            <person name="Hilbert H."/>
            <person name="Borzym K."/>
            <person name="Langer I."/>
            <person name="Beck A."/>
            <person name="Lehrach H."/>
            <person name="Reinhardt R."/>
            <person name="Pohl T.M."/>
            <person name="Eger P."/>
            <person name="Zimmermann W."/>
            <person name="Wedler H."/>
            <person name="Wambutt R."/>
            <person name="Purnelle B."/>
            <person name="Goffeau A."/>
            <person name="Cadieu E."/>
            <person name="Dreano S."/>
            <person name="Gloux S."/>
            <person name="Lelaure V."/>
            <person name="Mottier S."/>
            <person name="Galibert F."/>
            <person name="Aves S.J."/>
            <person name="Xiang Z."/>
            <person name="Hunt C."/>
            <person name="Moore K."/>
            <person name="Hurst S.M."/>
            <person name="Lucas M."/>
            <person name="Rochet M."/>
            <person name="Gaillardin C."/>
            <person name="Tallada V.A."/>
            <person name="Garzon A."/>
            <person name="Thode G."/>
            <person name="Daga R.R."/>
            <person name="Cruzado L."/>
            <person name="Jimenez J."/>
            <person name="Sanchez M."/>
            <person name="del Rey F."/>
            <person name="Benito J."/>
            <person name="Dominguez A."/>
            <person name="Revuelta J.L."/>
            <person name="Moreno S."/>
            <person name="Armstrong J."/>
            <person name="Forsburg S.L."/>
            <person name="Cerutti L."/>
            <person name="Lowe T."/>
            <person name="McCombie W.R."/>
            <person name="Paulsen I."/>
            <person name="Potashkin J."/>
            <person name="Shpakovski G.V."/>
            <person name="Ussery D."/>
            <person name="Barrell B.G."/>
            <person name="Nurse P."/>
        </authorList>
    </citation>
    <scope>NUCLEOTIDE SEQUENCE [LARGE SCALE GENOMIC DNA]</scope>
    <source>
        <strain>972 / ATCC 24843</strain>
    </source>
</reference>
<reference key="4">
    <citation type="journal article" date="2008" name="J. Proteome Res.">
        <title>Phosphoproteome analysis of fission yeast.</title>
        <authorList>
            <person name="Wilson-Grady J.T."/>
            <person name="Villen J."/>
            <person name="Gygi S.P."/>
        </authorList>
    </citation>
    <scope>PHOSPHORYLATION [LARGE SCALE ANALYSIS] AT THR-186 AND TYR-188</scope>
    <scope>IDENTIFICATION BY MASS SPECTROMETRY</scope>
</reference>
<comment type="function">
    <text>Regulates cell integrity and functions coordinately with the protein kinase C pathway (pck1 and pck2). Involved the regulation of wall architecture, cell shape, cytokinesis in exponential and stationary phase, and metabolism of ions.</text>
</comment>
<comment type="catalytic activity">
    <reaction>
        <text>L-seryl-[protein] + ATP = O-phospho-L-seryl-[protein] + ADP + H(+)</text>
        <dbReference type="Rhea" id="RHEA:17989"/>
        <dbReference type="Rhea" id="RHEA-COMP:9863"/>
        <dbReference type="Rhea" id="RHEA-COMP:11604"/>
        <dbReference type="ChEBI" id="CHEBI:15378"/>
        <dbReference type="ChEBI" id="CHEBI:29999"/>
        <dbReference type="ChEBI" id="CHEBI:30616"/>
        <dbReference type="ChEBI" id="CHEBI:83421"/>
        <dbReference type="ChEBI" id="CHEBI:456216"/>
        <dbReference type="EC" id="2.7.11.24"/>
    </reaction>
</comment>
<comment type="catalytic activity">
    <reaction>
        <text>L-threonyl-[protein] + ATP = O-phospho-L-threonyl-[protein] + ADP + H(+)</text>
        <dbReference type="Rhea" id="RHEA:46608"/>
        <dbReference type="Rhea" id="RHEA-COMP:11060"/>
        <dbReference type="Rhea" id="RHEA-COMP:11605"/>
        <dbReference type="ChEBI" id="CHEBI:15378"/>
        <dbReference type="ChEBI" id="CHEBI:30013"/>
        <dbReference type="ChEBI" id="CHEBI:30616"/>
        <dbReference type="ChEBI" id="CHEBI:61977"/>
        <dbReference type="ChEBI" id="CHEBI:456216"/>
        <dbReference type="EC" id="2.7.11.24"/>
    </reaction>
</comment>
<comment type="cofactor">
    <cofactor evidence="1">
        <name>Mg(2+)</name>
        <dbReference type="ChEBI" id="CHEBI:18420"/>
    </cofactor>
</comment>
<comment type="activity regulation">
    <text>Activated by tyrosine and threonine phosphorylation by skh1/pek1.</text>
</comment>
<comment type="domain">
    <text>The TXY motif contains the threonine and tyrosine residues whose phosphorylation activates the MAP kinases.</text>
</comment>
<comment type="PTM">
    <text evidence="1">Dually phosphorylated on Thr-186 and Tyr-188, which activates the enzyme.</text>
</comment>
<comment type="similarity">
    <text evidence="6">Belongs to the protein kinase superfamily. CMGC Ser/Thr protein kinase family. MAP kinase subfamily.</text>
</comment>
<keyword id="KW-0067">ATP-binding</keyword>
<keyword id="KW-0131">Cell cycle</keyword>
<keyword id="KW-0133">Cell shape</keyword>
<keyword id="KW-0418">Kinase</keyword>
<keyword id="KW-0547">Nucleotide-binding</keyword>
<keyword id="KW-0597">Phosphoprotein</keyword>
<keyword id="KW-1185">Reference proteome</keyword>
<keyword id="KW-0723">Serine/threonine-protein kinase</keyword>
<keyword id="KW-0808">Transferase</keyword>